<keyword id="KW-0002">3D-structure</keyword>
<keyword id="KW-1015">Disulfide bond</keyword>
<keyword id="KW-0325">Glycoprotein</keyword>
<keyword id="KW-0326">Glycosidase</keyword>
<keyword id="KW-0378">Hydrolase</keyword>
<keyword id="KW-1185">Reference proteome</keyword>
<keyword id="KW-0732">Signal</keyword>
<evidence type="ECO:0000250" key="1">
    <source>
        <dbReference type="UniProtKB" id="Q1XH05"/>
    </source>
</evidence>
<evidence type="ECO:0000250" key="2">
    <source>
        <dbReference type="UniProtKB" id="Q9SPP9"/>
    </source>
</evidence>
<evidence type="ECO:0000255" key="3"/>
<evidence type="ECO:0000255" key="4">
    <source>
        <dbReference type="PROSITE-ProRule" id="PRU00498"/>
    </source>
</evidence>
<evidence type="ECO:0000269" key="5">
    <source>
    </source>
</evidence>
<evidence type="ECO:0000269" key="6">
    <source>
    </source>
</evidence>
<evidence type="ECO:0000269" key="7">
    <source>
    </source>
</evidence>
<evidence type="ECO:0000303" key="8">
    <source>
    </source>
</evidence>
<evidence type="ECO:0000305" key="9"/>
<evidence type="ECO:0000312" key="10">
    <source>
        <dbReference type="EMBL" id="BAS90064.1"/>
    </source>
</evidence>
<evidence type="ECO:0000312" key="11">
    <source>
        <dbReference type="EMBL" id="CAE01910.2"/>
    </source>
</evidence>
<evidence type="ECO:0000312" key="12">
    <source>
        <dbReference type="EMBL" id="CAE54546.1"/>
    </source>
</evidence>
<evidence type="ECO:0007744" key="13">
    <source>
        <dbReference type="PDB" id="7D6B"/>
    </source>
</evidence>
<evidence type="ECO:0007829" key="14">
    <source>
        <dbReference type="PDB" id="7D6A"/>
    </source>
</evidence>
<feature type="signal peptide" evidence="3">
    <location>
        <begin position="1"/>
        <end position="26"/>
    </location>
</feature>
<feature type="chain" id="PRO_0000390335" description="Beta-glucosidase 18">
    <location>
        <begin position="27"/>
        <end position="505"/>
    </location>
</feature>
<feature type="active site" description="Proton donor" evidence="7 13">
    <location>
        <position position="194"/>
    </location>
</feature>
<feature type="active site" description="Nucleophile" evidence="7 13">
    <location>
        <position position="408"/>
    </location>
</feature>
<feature type="binding site" evidence="7 13">
    <location>
        <position position="46"/>
    </location>
    <ligand>
        <name>a beta-D-glucoside</name>
        <dbReference type="ChEBI" id="CHEBI:22798"/>
    </ligand>
</feature>
<feature type="binding site" evidence="7 13">
    <location>
        <position position="148"/>
    </location>
    <ligand>
        <name>a beta-D-glucoside</name>
        <dbReference type="ChEBI" id="CHEBI:22798"/>
    </ligand>
</feature>
<feature type="binding site" evidence="7 13">
    <location>
        <begin position="193"/>
        <end position="194"/>
    </location>
    <ligand>
        <name>a beta-D-glucoside</name>
        <dbReference type="ChEBI" id="CHEBI:22798"/>
    </ligand>
</feature>
<feature type="binding site" evidence="7 13">
    <location>
        <position position="337"/>
    </location>
    <ligand>
        <name>a beta-D-glucoside</name>
        <dbReference type="ChEBI" id="CHEBI:22798"/>
    </ligand>
</feature>
<feature type="binding site" evidence="2">
    <location>
        <position position="408"/>
    </location>
    <ligand>
        <name>a beta-D-glucoside</name>
        <dbReference type="ChEBI" id="CHEBI:22798"/>
    </ligand>
</feature>
<feature type="binding site" evidence="7 13">
    <location>
        <position position="457"/>
    </location>
    <ligand>
        <name>a beta-D-glucoside</name>
        <dbReference type="ChEBI" id="CHEBI:22798"/>
    </ligand>
</feature>
<feature type="binding site" evidence="7 13">
    <location>
        <begin position="464"/>
        <end position="465"/>
    </location>
    <ligand>
        <name>a beta-D-glucoside</name>
        <dbReference type="ChEBI" id="CHEBI:22798"/>
    </ligand>
</feature>
<feature type="binding site" evidence="1">
    <location>
        <position position="473"/>
    </location>
    <ligand>
        <name>a beta-D-glucoside</name>
        <dbReference type="ChEBI" id="CHEBI:22798"/>
    </ligand>
</feature>
<feature type="glycosylation site" description="N-linked (GlcNAc...) asparagine" evidence="4">
    <location>
        <position position="55"/>
    </location>
</feature>
<feature type="disulfide bond" evidence="7 13">
    <location>
        <begin position="213"/>
        <end position="220"/>
    </location>
</feature>
<feature type="disulfide bond" evidence="7 13">
    <location>
        <begin position="345"/>
        <end position="350"/>
    </location>
</feature>
<feature type="helix" evidence="14">
    <location>
        <begin position="29"/>
        <end position="31"/>
    </location>
</feature>
<feature type="strand" evidence="14">
    <location>
        <begin position="37"/>
        <end position="41"/>
    </location>
</feature>
<feature type="helix" evidence="14">
    <location>
        <begin position="44"/>
        <end position="47"/>
    </location>
</feature>
<feature type="helix" evidence="14">
    <location>
        <begin position="60"/>
        <end position="65"/>
    </location>
</feature>
<feature type="strand" evidence="14">
    <location>
        <begin position="67"/>
        <end position="71"/>
    </location>
</feature>
<feature type="strand" evidence="14">
    <location>
        <begin position="77"/>
        <end position="79"/>
    </location>
</feature>
<feature type="helix" evidence="14">
    <location>
        <begin position="83"/>
        <end position="97"/>
    </location>
</feature>
<feature type="strand" evidence="14">
    <location>
        <begin position="100"/>
        <end position="105"/>
    </location>
</feature>
<feature type="helix" evidence="14">
    <location>
        <begin position="108"/>
        <end position="111"/>
    </location>
</feature>
<feature type="helix" evidence="14">
    <location>
        <begin position="122"/>
        <end position="137"/>
    </location>
</feature>
<feature type="strand" evidence="14">
    <location>
        <begin position="141"/>
        <end position="149"/>
    </location>
</feature>
<feature type="helix" evidence="14">
    <location>
        <begin position="153"/>
        <end position="159"/>
    </location>
</feature>
<feature type="helix" evidence="14">
    <location>
        <begin position="161"/>
        <end position="163"/>
    </location>
</feature>
<feature type="helix" evidence="14">
    <location>
        <begin position="166"/>
        <end position="182"/>
    </location>
</feature>
<feature type="turn" evidence="14">
    <location>
        <begin position="183"/>
        <end position="185"/>
    </location>
</feature>
<feature type="strand" evidence="14">
    <location>
        <begin position="188"/>
        <end position="193"/>
    </location>
</feature>
<feature type="helix" evidence="14">
    <location>
        <begin position="195"/>
        <end position="203"/>
    </location>
</feature>
<feature type="turn" evidence="14">
    <location>
        <begin position="226"/>
        <end position="228"/>
    </location>
</feature>
<feature type="helix" evidence="14">
    <location>
        <begin position="229"/>
        <end position="251"/>
    </location>
</feature>
<feature type="helix" evidence="14">
    <location>
        <begin position="253"/>
        <end position="256"/>
    </location>
</feature>
<feature type="strand" evidence="14">
    <location>
        <begin position="259"/>
        <end position="265"/>
    </location>
</feature>
<feature type="strand" evidence="14">
    <location>
        <begin position="268"/>
        <end position="275"/>
    </location>
</feature>
<feature type="helix" evidence="14">
    <location>
        <begin position="276"/>
        <end position="287"/>
    </location>
</feature>
<feature type="helix" evidence="14">
    <location>
        <begin position="290"/>
        <end position="299"/>
    </location>
</feature>
<feature type="helix" evidence="14">
    <location>
        <begin position="304"/>
        <end position="310"/>
    </location>
</feature>
<feature type="helix" evidence="14">
    <location>
        <begin position="311"/>
        <end position="313"/>
    </location>
</feature>
<feature type="helix" evidence="14">
    <location>
        <begin position="319"/>
        <end position="325"/>
    </location>
</feature>
<feature type="strand" evidence="14">
    <location>
        <begin position="330"/>
        <end position="335"/>
    </location>
</feature>
<feature type="strand" evidence="14">
    <location>
        <begin position="339"/>
        <end position="344"/>
    </location>
</feature>
<feature type="strand" evidence="14">
    <location>
        <begin position="346"/>
        <end position="348"/>
    </location>
</feature>
<feature type="strand" evidence="14">
    <location>
        <begin position="352"/>
        <end position="354"/>
    </location>
</feature>
<feature type="turn" evidence="14">
    <location>
        <begin position="355"/>
        <end position="360"/>
    </location>
</feature>
<feature type="strand" evidence="14">
    <location>
        <begin position="361"/>
        <end position="367"/>
    </location>
</feature>
<feature type="strand" evidence="14">
    <location>
        <begin position="370"/>
        <end position="375"/>
    </location>
</feature>
<feature type="helix" evidence="14">
    <location>
        <begin position="386"/>
        <end position="399"/>
    </location>
</feature>
<feature type="strand" evidence="14">
    <location>
        <begin position="404"/>
        <end position="409"/>
    </location>
</feature>
<feature type="helix" evidence="14">
    <location>
        <begin position="421"/>
        <end position="425"/>
    </location>
</feature>
<feature type="helix" evidence="14">
    <location>
        <begin position="428"/>
        <end position="446"/>
    </location>
</feature>
<feature type="strand" evidence="14">
    <location>
        <begin position="451"/>
        <end position="457"/>
    </location>
</feature>
<feature type="helix" evidence="14">
    <location>
        <begin position="465"/>
        <end position="470"/>
    </location>
</feature>
<feature type="strand" evidence="14">
    <location>
        <begin position="475"/>
        <end position="479"/>
    </location>
</feature>
<feature type="turn" evidence="14">
    <location>
        <begin position="480"/>
        <end position="483"/>
    </location>
</feature>
<feature type="strand" evidence="14">
    <location>
        <begin position="484"/>
        <end position="487"/>
    </location>
</feature>
<feature type="helix" evidence="14">
    <location>
        <begin position="489"/>
        <end position="499"/>
    </location>
</feature>
<sequence>MAGGSKTRIHASLVSTLLLLLPLASAIHRSDFPASFLFGTATSSYQIEGAYLEGNKSLSNWDVFTHLPGNIKDGSNGDIADDHYHRYEEDVELMNSLGVNAYRFSISWSRILPKGRFGGVNPAGIDFYNKLIDSILLKGIQPFVTLTHYDIPQELEDRYGAWLNAEIQSDFGHFADVCFGAFGDRVKYWTTFNEPNVAVRHGYMLGTYPPSRCSPPFGHCARGGDSHAEPYVAAHNVILSHATAIEIYKRKYQSKQRGMIGMVLYSTWYEPLRDVPEDRLATERALAFETPWFLDPLVYGDYPPEMRQILGGRLPSFSPEDRRKLRYKLDFIGVNHYTTLYARDCMFSDCPQGQETQHALAAVTGESNGLPIGTPTAMPTFYVVPDGIEKMVKYFMRRYNNLPMFITENGYAQGGDSYTDAEDWIDDEDRIEYLEGYLTKLAKVIRDGADVRGYFAWSVVDNFEWLFGYTLRFGLYYIDYRTQERSPKLSALWYKEFLQNLHENQ</sequence>
<comment type="function">
    <text evidence="5 6">Hydrolyzes glycosides and monolignol glucosides (PubMed:25219312). Can hydrolyze para-nitrophenyl beta-D-glucopyranoside (pNPGlc) in vitro (PubMed:23811195, PubMed:25219312). Hydrolyzes para-nitrophenyl beta-D-fucopyranoside, para-nitrophenyl beta-D-galactopyranoside and para-nitrophenyl beta-D-xylopyranoside in vitro (PubMed:25219312). Hydrolyzes the monolignol glucosides coniferin and syringin with high catalytic efficiencies (PubMed:25219312).</text>
</comment>
<comment type="catalytic activity">
    <reaction evidence="5 6">
        <text>Hydrolysis of terminal, non-reducing beta-D-glucosyl residues with release of beta-D-glucose.</text>
        <dbReference type="EC" id="3.2.1.21"/>
    </reaction>
</comment>
<comment type="biophysicochemical properties">
    <kinetics>
        <KM evidence="6">4.84 mM for para-nitrophenyl beta-D-glucopyranoside</KM>
        <KM evidence="6">5.86 mM for para-nitrophenyl beta-D-fucopyranoside</KM>
        <KM evidence="6">1.26 mM for para-nitrophenyl beta-D-xylopyranoside</KM>
        <KM evidence="6">8.02 mM for coniferin</KM>
        <KM evidence="6">5.34 mM for syringin</KM>
        <text evidence="6">kcat is 3.82 sec(-1) with para-nitrophenyl beta-D-glucopyranoside as substrate. kcat is 23.8 sec(-1) with para-nitrophenyl beta-D-fucopyranoside as substrate. kcat is 0.381 sec(-1) with para-nitrophenyl beta-D-xylopyranoside as substrate. kcat is 255.8 sec(-1) with coniferin as substrate. kcat is 127.9 sec(-1) with syringin as substrate.</text>
    </kinetics>
    <phDependence>
        <text evidence="6">Optimum pH is 5.0 with para-nitrophenyl beta-D-glucopyranoside (pNPGlc) as substrate.</text>
    </phDependence>
    <temperatureDependence>
        <text evidence="6">Optimum temperature is 55 degrees Celsius with para-nitrophenyl beta-D-glucopyranoside (pNPGlc) as substrate.</text>
    </temperatureDependence>
</comment>
<comment type="tissue specificity">
    <text evidence="6">Expressed in roots, leaves, flowers and pollen.</text>
</comment>
<comment type="similarity">
    <text evidence="9">Belongs to the glycosyl hydrolase 1 family.</text>
</comment>
<comment type="sequence caution" evidence="9">
    <conflict type="erroneous gene model prediction">
        <sequence resource="EMBL-CDS" id="BAF15219"/>
    </conflict>
</comment>
<comment type="sequence caution" evidence="9">
    <conflict type="erroneous gene model prediction">
        <sequence resource="EMBL-CDS" id="BAS90064"/>
    </conflict>
</comment>
<organism>
    <name type="scientific">Oryza sativa subsp. japonica</name>
    <name type="common">Rice</name>
    <dbReference type="NCBI Taxonomy" id="39947"/>
    <lineage>
        <taxon>Eukaryota</taxon>
        <taxon>Viridiplantae</taxon>
        <taxon>Streptophyta</taxon>
        <taxon>Embryophyta</taxon>
        <taxon>Tracheophyta</taxon>
        <taxon>Spermatophyta</taxon>
        <taxon>Magnoliopsida</taxon>
        <taxon>Liliopsida</taxon>
        <taxon>Poales</taxon>
        <taxon>Poaceae</taxon>
        <taxon>BOP clade</taxon>
        <taxon>Oryzoideae</taxon>
        <taxon>Oryzeae</taxon>
        <taxon>Oryzinae</taxon>
        <taxon>Oryza</taxon>
        <taxon>Oryza sativa</taxon>
    </lineage>
</organism>
<accession>Q7XSK0</accession>
<accession>A0A0P0WCH1</accession>
<accession>Q0JBR8</accession>
<name>BGL18_ORYSJ</name>
<dbReference type="EC" id="3.2.1.21" evidence="5 6"/>
<dbReference type="EMBL" id="AL606622">
    <property type="protein sequence ID" value="CAE54546.1"/>
    <property type="molecule type" value="Genomic_DNA"/>
</dbReference>
<dbReference type="EMBL" id="AL606659">
    <property type="protein sequence ID" value="CAE01910.2"/>
    <property type="molecule type" value="Genomic_DNA"/>
</dbReference>
<dbReference type="EMBL" id="AP008210">
    <property type="protein sequence ID" value="BAF15219.1"/>
    <property type="status" value="ALT_SEQ"/>
    <property type="molecule type" value="Genomic_DNA"/>
</dbReference>
<dbReference type="EMBL" id="AP014960">
    <property type="protein sequence ID" value="BAS90064.1"/>
    <property type="status" value="ALT_SEQ"/>
    <property type="molecule type" value="Genomic_DNA"/>
</dbReference>
<dbReference type="RefSeq" id="XP_015636697.1">
    <property type="nucleotide sequence ID" value="XM_015781211.1"/>
</dbReference>
<dbReference type="PDB" id="7D6A">
    <property type="method" value="X-ray"/>
    <property type="resolution" value="1.70 A"/>
    <property type="chains" value="A/B=26-505"/>
</dbReference>
<dbReference type="PDB" id="7D6B">
    <property type="method" value="X-ray"/>
    <property type="resolution" value="2.10 A"/>
    <property type="chains" value="A/B=26-505"/>
</dbReference>
<dbReference type="PDBsum" id="7D6A"/>
<dbReference type="PDBsum" id="7D6B"/>
<dbReference type="SMR" id="Q7XSK0"/>
<dbReference type="FunCoup" id="Q7XSK0">
    <property type="interactions" value="433"/>
</dbReference>
<dbReference type="STRING" id="39947.Q7XSK0"/>
<dbReference type="CAZy" id="GH1">
    <property type="family name" value="Glycoside Hydrolase Family 1"/>
</dbReference>
<dbReference type="GlyCosmos" id="Q7XSK0">
    <property type="glycosylation" value="1 site, No reported glycans"/>
</dbReference>
<dbReference type="PaxDb" id="39947-Q7XSK0"/>
<dbReference type="EnsemblPlants" id="Os04t0513900-01">
    <property type="protein sequence ID" value="Os04t0513900-01"/>
    <property type="gene ID" value="Os04g0513900"/>
</dbReference>
<dbReference type="Gramene" id="Os04t0513900-01">
    <property type="protein sequence ID" value="Os04t0513900-01"/>
    <property type="gene ID" value="Os04g0513900"/>
</dbReference>
<dbReference type="KEGG" id="dosa:Os04g0513900"/>
<dbReference type="eggNOG" id="KOG0626">
    <property type="taxonomic scope" value="Eukaryota"/>
</dbReference>
<dbReference type="InParanoid" id="Q7XSK0"/>
<dbReference type="OrthoDB" id="65569at2759"/>
<dbReference type="BRENDA" id="3.2.1.126">
    <property type="organism ID" value="8948"/>
</dbReference>
<dbReference type="Proteomes" id="UP000000763">
    <property type="component" value="Chromosome 4"/>
</dbReference>
<dbReference type="Proteomes" id="UP000059680">
    <property type="component" value="Chromosome 4"/>
</dbReference>
<dbReference type="GO" id="GO:0033907">
    <property type="term" value="F:beta-D-fucosidase activity"/>
    <property type="evidence" value="ECO:0000314"/>
    <property type="project" value="UniProtKB"/>
</dbReference>
<dbReference type="GO" id="GO:0004565">
    <property type="term" value="F:beta-galactosidase activity"/>
    <property type="evidence" value="ECO:0000314"/>
    <property type="project" value="UniProtKB"/>
</dbReference>
<dbReference type="GO" id="GO:0008422">
    <property type="term" value="F:beta-glucosidase activity"/>
    <property type="evidence" value="ECO:0000314"/>
    <property type="project" value="UniProtKB"/>
</dbReference>
<dbReference type="GO" id="GO:0047782">
    <property type="term" value="F:coniferin beta-glucosidase activity"/>
    <property type="evidence" value="ECO:0000314"/>
    <property type="project" value="UniProtKB"/>
</dbReference>
<dbReference type="GO" id="GO:0005975">
    <property type="term" value="P:carbohydrate metabolic process"/>
    <property type="evidence" value="ECO:0007669"/>
    <property type="project" value="InterPro"/>
</dbReference>
<dbReference type="GO" id="GO:0033491">
    <property type="term" value="P:coniferin metabolic process"/>
    <property type="evidence" value="ECO:0000314"/>
    <property type="project" value="UniProtKB"/>
</dbReference>
<dbReference type="GO" id="GO:0016137">
    <property type="term" value="P:glycoside metabolic process"/>
    <property type="evidence" value="ECO:0000314"/>
    <property type="project" value="UniProtKB"/>
</dbReference>
<dbReference type="FunFam" id="3.20.20.80:FF:000020">
    <property type="entry name" value="Beta-glucosidase 12"/>
    <property type="match status" value="1"/>
</dbReference>
<dbReference type="Gene3D" id="3.20.20.80">
    <property type="entry name" value="Glycosidases"/>
    <property type="match status" value="1"/>
</dbReference>
<dbReference type="InterPro" id="IPR001360">
    <property type="entry name" value="Glyco_hydro_1"/>
</dbReference>
<dbReference type="InterPro" id="IPR033132">
    <property type="entry name" value="Glyco_hydro_1_N_CS"/>
</dbReference>
<dbReference type="InterPro" id="IPR017853">
    <property type="entry name" value="Glycoside_hydrolase_SF"/>
</dbReference>
<dbReference type="PANTHER" id="PTHR10353:SF236">
    <property type="entry name" value="BETA-GLUCOSIDASE 18"/>
    <property type="match status" value="1"/>
</dbReference>
<dbReference type="PANTHER" id="PTHR10353">
    <property type="entry name" value="GLYCOSYL HYDROLASE"/>
    <property type="match status" value="1"/>
</dbReference>
<dbReference type="Pfam" id="PF00232">
    <property type="entry name" value="Glyco_hydro_1"/>
    <property type="match status" value="1"/>
</dbReference>
<dbReference type="PRINTS" id="PR00131">
    <property type="entry name" value="GLHYDRLASE1"/>
</dbReference>
<dbReference type="SUPFAM" id="SSF51445">
    <property type="entry name" value="(Trans)glycosidases"/>
    <property type="match status" value="1"/>
</dbReference>
<dbReference type="PROSITE" id="PS00653">
    <property type="entry name" value="GLYCOSYL_HYDROL_F1_2"/>
    <property type="match status" value="1"/>
</dbReference>
<gene>
    <name evidence="8" type="primary">BGLU18</name>
    <name evidence="10" type="ordered locus">Os04g0513900</name>
    <name evidence="9" type="ordered locus">LOC_Os04g43410</name>
    <name evidence="12" type="ORF">OSJNBa0004N05.26</name>
    <name evidence="11" type="ORF">OSJNBb0070J16.3</name>
</gene>
<reference key="1">
    <citation type="journal article" date="2002" name="Nature">
        <title>Sequence and analysis of rice chromosome 4.</title>
        <authorList>
            <person name="Feng Q."/>
            <person name="Zhang Y."/>
            <person name="Hao P."/>
            <person name="Wang S."/>
            <person name="Fu G."/>
            <person name="Huang Y."/>
            <person name="Li Y."/>
            <person name="Zhu J."/>
            <person name="Liu Y."/>
            <person name="Hu X."/>
            <person name="Jia P."/>
            <person name="Zhang Y."/>
            <person name="Zhao Q."/>
            <person name="Ying K."/>
            <person name="Yu S."/>
            <person name="Tang Y."/>
            <person name="Weng Q."/>
            <person name="Zhang L."/>
            <person name="Lu Y."/>
            <person name="Mu J."/>
            <person name="Lu Y."/>
            <person name="Zhang L.S."/>
            <person name="Yu Z."/>
            <person name="Fan D."/>
            <person name="Liu X."/>
            <person name="Lu T."/>
            <person name="Li C."/>
            <person name="Wu Y."/>
            <person name="Sun T."/>
            <person name="Lei H."/>
            <person name="Li T."/>
            <person name="Hu H."/>
            <person name="Guan J."/>
            <person name="Wu M."/>
            <person name="Zhang R."/>
            <person name="Zhou B."/>
            <person name="Chen Z."/>
            <person name="Chen L."/>
            <person name="Jin Z."/>
            <person name="Wang R."/>
            <person name="Yin H."/>
            <person name="Cai Z."/>
            <person name="Ren S."/>
            <person name="Lv G."/>
            <person name="Gu W."/>
            <person name="Zhu G."/>
            <person name="Tu Y."/>
            <person name="Jia J."/>
            <person name="Zhang Y."/>
            <person name="Chen J."/>
            <person name="Kang H."/>
            <person name="Chen X."/>
            <person name="Shao C."/>
            <person name="Sun Y."/>
            <person name="Hu Q."/>
            <person name="Zhang X."/>
            <person name="Zhang W."/>
            <person name="Wang L."/>
            <person name="Ding C."/>
            <person name="Sheng H."/>
            <person name="Gu J."/>
            <person name="Chen S."/>
            <person name="Ni L."/>
            <person name="Zhu F."/>
            <person name="Chen W."/>
            <person name="Lan L."/>
            <person name="Lai Y."/>
            <person name="Cheng Z."/>
            <person name="Gu M."/>
            <person name="Jiang J."/>
            <person name="Li J."/>
            <person name="Hong G."/>
            <person name="Xue Y."/>
            <person name="Han B."/>
        </authorList>
    </citation>
    <scope>NUCLEOTIDE SEQUENCE [LARGE SCALE GENOMIC DNA]</scope>
    <source>
        <strain>cv. Nipponbare</strain>
    </source>
</reference>
<reference key="2">
    <citation type="journal article" date="2005" name="Nature">
        <title>The map-based sequence of the rice genome.</title>
        <authorList>
            <consortium name="International rice genome sequencing project (IRGSP)"/>
        </authorList>
    </citation>
    <scope>NUCLEOTIDE SEQUENCE [LARGE SCALE GENOMIC DNA]</scope>
    <source>
        <strain>cv. Nipponbare</strain>
    </source>
</reference>
<reference key="3">
    <citation type="journal article" date="2008" name="Nucleic Acids Res.">
        <title>The rice annotation project database (RAP-DB): 2008 update.</title>
        <authorList>
            <consortium name="The rice annotation project (RAP)"/>
        </authorList>
    </citation>
    <scope>GENOME REANNOTATION</scope>
    <source>
        <strain>cv. Nipponbare</strain>
    </source>
</reference>
<reference key="4">
    <citation type="journal article" date="2013" name="Rice">
        <title>Improvement of the Oryza sativa Nipponbare reference genome using next generation sequence and optical map data.</title>
        <authorList>
            <person name="Kawahara Y."/>
            <person name="de la Bastide M."/>
            <person name="Hamilton J.P."/>
            <person name="Kanamori H."/>
            <person name="McCombie W.R."/>
            <person name="Ouyang S."/>
            <person name="Schwartz D.C."/>
            <person name="Tanaka T."/>
            <person name="Wu J."/>
            <person name="Zhou S."/>
            <person name="Childs K.L."/>
            <person name="Davidson R.M."/>
            <person name="Lin H."/>
            <person name="Quesada-Ocampo L."/>
            <person name="Vaillancourt B."/>
            <person name="Sakai H."/>
            <person name="Lee S.S."/>
            <person name="Kim J."/>
            <person name="Numa H."/>
            <person name="Itoh T."/>
            <person name="Buell C.R."/>
            <person name="Matsumoto T."/>
        </authorList>
    </citation>
    <scope>GENOME REANNOTATION</scope>
    <source>
        <strain>cv. Nipponbare</strain>
    </source>
</reference>
<reference key="5">
    <citation type="journal article" date="2006" name="BMC Plant Biol.">
        <title>Analysis of rice glycosyl hydrolase family 1 and expression of Os4bglu12 beta-glucosidase.</title>
        <authorList>
            <person name="Opassiri R."/>
            <person name="Pomthong B."/>
            <person name="Onkoksoong T."/>
            <person name="Akiyama T."/>
            <person name="Esen A."/>
            <person name="Ketudat Cairns J.R."/>
        </authorList>
    </citation>
    <scope>GENE FAMILY</scope>
    <scope>NOMENCLATURE</scope>
</reference>
<reference key="6">
    <citation type="journal article" date="2013" name="Arch. Biochem. Biophys.">
        <title>Enzymatic and structural characterization of hydrolysis of gibberellin A4 glucosyl ester by a rice beta-D-glucosidase.</title>
        <authorList>
            <person name="Hua Y."/>
            <person name="Sansenya S."/>
            <person name="Saetang C."/>
            <person name="Wakuta S."/>
            <person name="Ketudat Cairns J.R."/>
        </authorList>
    </citation>
    <scope>FUNCTION</scope>
    <scope>CATALYTIC ACTIVITY</scope>
</reference>
<reference key="7">
    <citation type="journal article" date="2014" name="Plant Sci.">
        <title>Expression and enzymatic properties of rice (Oryza sativa L.) monolignol beta-glucosidases.</title>
        <authorList>
            <person name="Baiya S."/>
            <person name="Hua Y."/>
            <person name="Ekkhara W."/>
            <person name="Ketudat Cairns J.R."/>
        </authorList>
    </citation>
    <scope>FUNCTION</scope>
    <scope>CATALYTIC ACTIVITY</scope>
    <scope>BIOPHYSICOCHEMICAL PROPERTIES</scope>
    <scope>TISSUE SPECIFICITY</scope>
</reference>
<reference key="8">
    <citation type="journal article" date="2021" name="PLoS ONE">
        <title>Structural analysis of rice Os4BGlu18 monolignol beta-glucosidase.</title>
        <authorList>
            <person name="Baiya S."/>
            <person name="Pengthaisong S."/>
            <person name="Kitjaruwankul S."/>
            <person name="Ketudat Cairns J.R."/>
        </authorList>
    </citation>
    <scope>X-RAY CRYSTALLOGRAPHY (1.70 ANGSTROMS) OF 26-505 IN COMPLEX WITH A BETA-D-GLUCOSIDE</scope>
    <scope>ACTIVE SITE</scope>
    <scope>DISULFIDE BONDS</scope>
</reference>
<protein>
    <recommendedName>
        <fullName evidence="8">Beta-glucosidase 18</fullName>
        <shortName evidence="8">Os4bglu18</shortName>
        <ecNumber evidence="5 6">3.2.1.21</ecNumber>
    </recommendedName>
</protein>
<proteinExistence type="evidence at protein level"/>